<name>PCEB2_DESHA</name>
<accession>Q8GJ30</accession>
<keyword id="KW-0002">3D-structure</keyword>
<keyword id="KW-1003">Cell membrane</keyword>
<keyword id="KW-0472">Membrane</keyword>
<keyword id="KW-0812">Transmembrane</keyword>
<keyword id="KW-1133">Transmembrane helix</keyword>
<dbReference type="EMBL" id="AJ439608">
    <property type="protein sequence ID" value="CAD28793.2"/>
    <property type="molecule type" value="Genomic_DNA"/>
</dbReference>
<dbReference type="PDB" id="8Q4H">
    <property type="method" value="EM"/>
    <property type="resolution" value="2.83 A"/>
    <property type="chains" value="C/D=1-89"/>
</dbReference>
<dbReference type="PDBsum" id="8Q4H"/>
<dbReference type="EMDB" id="EMD-18148"/>
<dbReference type="SMR" id="Q8GJ30"/>
<dbReference type="GO" id="GO:0005886">
    <property type="term" value="C:plasma membrane"/>
    <property type="evidence" value="ECO:0007669"/>
    <property type="project" value="UniProtKB-SubCell"/>
</dbReference>
<organism>
    <name type="scientific">Desulfitobacterium hafniense</name>
    <name type="common">Desulfitobacterium frappieri</name>
    <dbReference type="NCBI Taxonomy" id="49338"/>
    <lineage>
        <taxon>Bacteria</taxon>
        <taxon>Bacillati</taxon>
        <taxon>Bacillota</taxon>
        <taxon>Clostridia</taxon>
        <taxon>Eubacteriales</taxon>
        <taxon>Desulfitobacteriaceae</taxon>
        <taxon>Desulfitobacterium</taxon>
    </lineage>
</organism>
<proteinExistence type="evidence at protein level"/>
<evidence type="ECO:0000255" key="1"/>
<evidence type="ECO:0000269" key="2">
    <source>
    </source>
</evidence>
<evidence type="ECO:0000303" key="3">
    <source>
    </source>
</evidence>
<evidence type="ECO:0000305" key="4"/>
<evidence type="ECO:0000305" key="5">
    <source>
    </source>
</evidence>
<evidence type="ECO:0007829" key="6">
    <source>
        <dbReference type="PDB" id="8Q4H"/>
    </source>
</evidence>
<comment type="function">
    <text evidence="5">May act as a membrane anchor for the tetrachloroethene reductive dehalogenase PceA.</text>
</comment>
<comment type="subcellular location">
    <subcellularLocation>
        <location evidence="4">Cell membrane</location>
        <topology evidence="1">Multi-pass membrane protein</topology>
    </subcellularLocation>
</comment>
<comment type="induction">
    <text evidence="2">Coexpressed with pceA.</text>
</comment>
<comment type="similarity">
    <text evidence="4">Belongs to the PceB family.</text>
</comment>
<reference key="1">
    <citation type="journal article" date="2003" name="Appl. Environ. Microbiol.">
        <title>Characterization of the corrinoid iron-sulfur protein tetrachloroethene reductive dehalogenase of Dehalobacter restrictus.</title>
        <authorList>
            <person name="Maillard J."/>
            <person name="Schumacher W."/>
            <person name="Vazquez F."/>
            <person name="Regeard C."/>
            <person name="Hagen W.R."/>
            <person name="Holliger C."/>
        </authorList>
    </citation>
    <scope>NUCLEOTIDE SEQUENCE [GENOMIC DNA]</scope>
    <scope>FUNCTION</scope>
    <source>
        <strain>TCE1</strain>
    </source>
</reference>
<reference key="2">
    <citation type="journal article" date="2005" name="Environ. Microbiol.">
        <title>Isolation and characterization of Tn-Dha1, a transposon containing the tetrachloroethene reductive dehalogenase of Desulfitobacterium hafniense strain TCE1.</title>
        <authorList>
            <person name="Maillard J."/>
            <person name="Regeard C."/>
            <person name="Holliger C."/>
        </authorList>
    </citation>
    <scope>NUCLEOTIDE SEQUENCE [GENOMIC DNA]</scope>
    <scope>INDUCTION</scope>
    <source>
        <strain>TCE1</strain>
    </source>
</reference>
<protein>
    <recommendedName>
        <fullName evidence="4">Probable tetrachloroethene reductive dehalogenase membrane anchor protein</fullName>
    </recommendedName>
</protein>
<gene>
    <name evidence="3" type="primary">pceB</name>
</gene>
<sequence length="105" mass="11843">MNIYDVLIWMALGMTALLIQYGIWRYLKGKGKDTIPLQICGFLANFFFIFALAWGYSSFSEREYQAIGMGFIFFGGTALIPAIITYRLANHPAKKIRESSDSISA</sequence>
<feature type="chain" id="PRO_0000453976" description="Probable tetrachloroethene reductive dehalogenase membrane anchor protein">
    <location>
        <begin position="1"/>
        <end position="105"/>
    </location>
</feature>
<feature type="transmembrane region" description="Helical" evidence="1">
    <location>
        <begin position="3"/>
        <end position="23"/>
    </location>
</feature>
<feature type="transmembrane region" description="Helical" evidence="1">
    <location>
        <begin position="35"/>
        <end position="55"/>
    </location>
</feature>
<feature type="transmembrane region" description="Helical" evidence="1">
    <location>
        <begin position="66"/>
        <end position="86"/>
    </location>
</feature>
<feature type="helix" evidence="6">
    <location>
        <begin position="4"/>
        <end position="30"/>
    </location>
</feature>
<feature type="helix" evidence="6">
    <location>
        <begin position="35"/>
        <end position="60"/>
    </location>
</feature>
<feature type="helix" evidence="6">
    <location>
        <begin position="65"/>
        <end position="87"/>
    </location>
</feature>